<reference key="1">
    <citation type="journal article" date="2000" name="Development">
        <title>An orthologue of the kit-related gene fms is required for development of neural crest-derived xanthophores and a subpopulation of adult melanocytes in the zebrafish, Danio rerio.</title>
        <authorList>
            <person name="Parichy D.M."/>
            <person name="Ransom D.G."/>
            <person name="Paw B."/>
            <person name="Zon L.I."/>
            <person name="Johnson S.L."/>
        </authorList>
    </citation>
    <scope>NUCLEOTIDE SEQUENCE [MRNA]</scope>
    <scope>FUNCTION</scope>
    <source>
        <strain>AB</strain>
    </source>
</reference>
<proteinExistence type="evidence at transcript level"/>
<comment type="function">
    <text evidence="1 7">Tyrosine-protein kinase that acts as a cell-surface receptor for CSF1 and plays an essential role in the regulation of survival, proliferation and differentiation of hematopoietic precursor cells, especially mononuclear phagocytes, such as macrophages and monocytes. Plays an important role in innate immunity and in inflammatory processes. Plays an important role in the regulation of osteoclast proliferation and differentiation, the regulation of bone resorption, and is required for normal bone development. Promotes reorganization of the actin cytoskeleton, regulates formation of membrane ruffles, cell adhesion and cell migration. Activates several signaling pathways in response to ligand binding (By similarity).</text>
</comment>
<comment type="catalytic activity">
    <reaction evidence="5">
        <text>L-tyrosyl-[protein] + ATP = O-phospho-L-tyrosyl-[protein] + ADP + H(+)</text>
        <dbReference type="Rhea" id="RHEA:10596"/>
        <dbReference type="Rhea" id="RHEA-COMP:10136"/>
        <dbReference type="Rhea" id="RHEA-COMP:20101"/>
        <dbReference type="ChEBI" id="CHEBI:15378"/>
        <dbReference type="ChEBI" id="CHEBI:30616"/>
        <dbReference type="ChEBI" id="CHEBI:46858"/>
        <dbReference type="ChEBI" id="CHEBI:61978"/>
        <dbReference type="ChEBI" id="CHEBI:456216"/>
        <dbReference type="EC" id="2.7.10.1"/>
    </reaction>
</comment>
<comment type="activity regulation">
    <text evidence="1">Present in an inactive conformation in the absence of bound ligand. CSF1 binding leads to dimerization and activation by autophosphorylation on tyrosine residues (By similarity).</text>
</comment>
<comment type="subunit">
    <text evidence="1">Monomer. Homodimer. Interacts with CSF1 (By similarity).</text>
</comment>
<comment type="subcellular location">
    <subcellularLocation>
        <location evidence="1">Cell membrane</location>
        <topology evidence="1">Single-pass type I membrane protein</topology>
    </subcellularLocation>
    <text evidence="1">The autophosphorylated receptor is ubiquitinated and internalized, leading to its degradation.</text>
</comment>
<comment type="domain">
    <text evidence="1">The juxtamembrane domain functions as autoinhibitory region. Phosphorylation of tyrosine residues in this region leads to a conformation change and activation of the kinase (By similarity).</text>
</comment>
<comment type="domain">
    <text evidence="1">The activation loop plays an important role in the regulation of kinase activity. Phosphorylation of tyrosine residues in this region leads to a conformation change and activation of the kinase (By similarity).</text>
</comment>
<comment type="PTM">
    <text evidence="1">Autophosphorylated in response to CSF1 binding. autophosphorylation, leading to its degradation.</text>
</comment>
<comment type="PTM">
    <text evidence="1">Ubiquitinated. Becomes rapidly polyubiquitinated after autophosphorylation, leading to its degradation (By similarity).</text>
</comment>
<comment type="similarity">
    <text evidence="4">Belongs to the protein kinase superfamily. Tyr protein kinase family. CSF-1/PDGF receptor subfamily.</text>
</comment>
<evidence type="ECO:0000250" key="1"/>
<evidence type="ECO:0000255" key="2"/>
<evidence type="ECO:0000255" key="3">
    <source>
        <dbReference type="PROSITE-ProRule" id="PRU00114"/>
    </source>
</evidence>
<evidence type="ECO:0000255" key="4">
    <source>
        <dbReference type="PROSITE-ProRule" id="PRU00159"/>
    </source>
</evidence>
<evidence type="ECO:0000255" key="5">
    <source>
        <dbReference type="PROSITE-ProRule" id="PRU10028"/>
    </source>
</evidence>
<evidence type="ECO:0000256" key="6">
    <source>
        <dbReference type="SAM" id="MobiDB-lite"/>
    </source>
</evidence>
<evidence type="ECO:0000269" key="7">
    <source>
    </source>
</evidence>
<gene>
    <name type="primary">csf1r</name>
    <name type="synonym">fms</name>
</gene>
<protein>
    <recommendedName>
        <fullName>Macrophage colony-stimulating factor 1 receptor</fullName>
    </recommendedName>
    <alternativeName>
        <fullName>CSF-1 receptor</fullName>
        <shortName>CSF-1-R</shortName>
        <shortName>CSF-1R</shortName>
        <shortName>M-CSF-R</shortName>
        <ecNumber>2.7.10.1</ecNumber>
    </alternativeName>
    <alternativeName>
        <fullName>Proto-oncogene c-Fms homolog</fullName>
    </alternativeName>
</protein>
<accession>Q9I8N6</accession>
<name>CSF1R_DANRE</name>
<sequence length="977" mass="110188">MFFALLFLIGILLGQVQGWSEPRIRLSSGALAGTDVILESGSPLQLVCEGDGPVTFLPRLAKHKRYISKEVGKIRSFRVEKTTVDFTGTYKCVYMNGNDSNLSSSVHVFVRDSRVLFVSPSTSLRYVRKEGEDLLLPCLLTDPEATDFTFRMDNGSAAPYGMNITYDPRKGVLIRNVHPGFNADYICCARIGGAEKVSKIFSINIIQRLRFPPYVYLKRNEYVKLVGERLQISCTTNNPNFYYNVTWTHSSRMLPKAEEKSTMEGDRLAIESILTIPSVQLSHTGNITCTGQNEAGANSSTTQLLVVEEPYIRLSPKLSSKLTHRGLSIEVSEGDDVDLGVLIEAYPPLTSHKWETPTSHNASLPENRFFNHNDRYEALLLLKRLNFEEIGQYTLNVKNSMKSASITFDIKMYTKPVARVKWENVTTLSCRSYGYPAPSILWYQCTGIRTTCPENTTDLQPIQTQTVEFQKESFGAVGVESVLTVGPNRRMTVVCVAFNLVGQGSDTFSMEVSDQIFTSAMCGSTVAMVVLGLLLIFMIYKYKQKPRYEIRWKIIEATNGNNYTFIDPTQLPYNEKWEFPRDKLKLGKTLGAGAFGKVVEATAYGLGKEDNITRVAVKMLKASAHPDEREALMSELKILSHLGQHKNIVNLLGACTHGGPVLVITEYCCHGDLLNFLRSKAENFLNFVMTIPNFPEPMTDYKNVSTERMFVRSDSGISSTCSDHYLDMRPVTSRPTNSALDSSSECQEDSWPLDMDDLLRFSSQVAQGLDFLAAKNCIHRDVAARNVLLTNSRVAKICDFGLARDIMNDSNYVVKGNARLPVKWMAPESIFECVYTVQSDVWSYGIMLWEIFSLGKSPYPNILVDSKFYKMIKCGYQMSRPDFAPPEMYTIMKMCWNLDAAERPTFSKISQMIQRMLGETSEQQDTQEYKNIPTEAEAEQQLESCDPVKHEDESFETSCDQEEEDQPLMKPNNYQFC</sequence>
<feature type="signal peptide" evidence="2">
    <location>
        <begin position="1"/>
        <end position="18"/>
    </location>
</feature>
<feature type="chain" id="PRO_0000249006" description="Macrophage colony-stimulating factor 1 receptor">
    <location>
        <begin position="19"/>
        <end position="977"/>
    </location>
</feature>
<feature type="topological domain" description="Extracellular" evidence="2">
    <location>
        <begin position="19"/>
        <end position="519"/>
    </location>
</feature>
<feature type="transmembrane region" description="Helical" evidence="2">
    <location>
        <begin position="520"/>
        <end position="540"/>
    </location>
</feature>
<feature type="topological domain" description="Cytoplasmic" evidence="2">
    <location>
        <begin position="541"/>
        <end position="977"/>
    </location>
</feature>
<feature type="domain" description="Ig-like C2-type 1">
    <location>
        <begin position="22"/>
        <end position="109"/>
    </location>
</feature>
<feature type="domain" description="Ig-like C2-type 2">
    <location>
        <begin position="120"/>
        <end position="198"/>
    </location>
</feature>
<feature type="domain" description="Ig-like C2-type 3">
    <location>
        <begin position="213"/>
        <end position="305"/>
    </location>
</feature>
<feature type="domain" description="Ig-like C2-type 4">
    <location>
        <begin position="316"/>
        <end position="407"/>
    </location>
</feature>
<feature type="domain" description="Ig-like C2-type 5">
    <location>
        <begin position="408"/>
        <end position="513"/>
    </location>
</feature>
<feature type="domain" description="Protein kinase" evidence="4">
    <location>
        <begin position="584"/>
        <end position="917"/>
    </location>
</feature>
<feature type="region of interest" description="Regulatory juxtamembrane domain" evidence="1">
    <location>
        <begin position="544"/>
        <end position="576"/>
    </location>
</feature>
<feature type="region of interest" description="Activation loop" evidence="1">
    <location>
        <begin position="799"/>
        <end position="821"/>
    </location>
</feature>
<feature type="region of interest" description="Disordered" evidence="6">
    <location>
        <begin position="919"/>
        <end position="977"/>
    </location>
</feature>
<feature type="compositionally biased region" description="Acidic residues" evidence="6">
    <location>
        <begin position="953"/>
        <end position="966"/>
    </location>
</feature>
<feature type="active site" description="Proton acceptor" evidence="4 5">
    <location>
        <position position="781"/>
    </location>
</feature>
<feature type="binding site" evidence="4">
    <location>
        <begin position="590"/>
        <end position="598"/>
    </location>
    <ligand>
        <name>ATP</name>
        <dbReference type="ChEBI" id="CHEBI:30616"/>
    </ligand>
</feature>
<feature type="binding site" evidence="4">
    <location>
        <position position="618"/>
    </location>
    <ligand>
        <name>ATP</name>
        <dbReference type="ChEBI" id="CHEBI:30616"/>
    </ligand>
</feature>
<feature type="modified residue" description="Phosphotyrosine; by autocatalysis" evidence="1">
    <location>
        <position position="563"/>
    </location>
</feature>
<feature type="modified residue" description="Phosphotyrosine; by autocatalysis" evidence="1">
    <location>
        <position position="701"/>
    </location>
</feature>
<feature type="modified residue" description="Phosphotyrosine; by autocatalysis" evidence="1">
    <location>
        <position position="725"/>
    </location>
</feature>
<feature type="modified residue" description="Phosphotyrosine; by autocatalysis" evidence="1">
    <location>
        <position position="812"/>
    </location>
</feature>
<feature type="modified residue" description="Phosphotyrosine; by autocatalysis" evidence="1">
    <location>
        <position position="929"/>
    </location>
</feature>
<feature type="modified residue" description="Phosphotyrosine; by autocatalysis" evidence="1">
    <location>
        <position position="974"/>
    </location>
</feature>
<feature type="glycosylation site" description="N-linked (GlcNAc...) asparagine" evidence="2">
    <location>
        <position position="98"/>
    </location>
</feature>
<feature type="glycosylation site" description="N-linked (GlcNAc...) asparagine" evidence="2">
    <location>
        <position position="101"/>
    </location>
</feature>
<feature type="glycosylation site" description="N-linked (GlcNAc...) asparagine" evidence="2">
    <location>
        <position position="154"/>
    </location>
</feature>
<feature type="glycosylation site" description="N-linked (GlcNAc...) asparagine" evidence="2">
    <location>
        <position position="163"/>
    </location>
</feature>
<feature type="glycosylation site" description="N-linked (GlcNAc...) asparagine" evidence="2">
    <location>
        <position position="244"/>
    </location>
</feature>
<feature type="glycosylation site" description="N-linked (GlcNAc...) asparagine" evidence="2">
    <location>
        <position position="286"/>
    </location>
</feature>
<feature type="glycosylation site" description="N-linked (GlcNAc...) asparagine" evidence="2">
    <location>
        <position position="298"/>
    </location>
</feature>
<feature type="glycosylation site" description="N-linked (GlcNAc...) asparagine" evidence="2">
    <location>
        <position position="361"/>
    </location>
</feature>
<feature type="glycosylation site" description="N-linked (GlcNAc...) asparagine" evidence="2">
    <location>
        <position position="424"/>
    </location>
</feature>
<feature type="glycosylation site" description="N-linked (GlcNAc...) asparagine" evidence="2">
    <location>
        <position position="455"/>
    </location>
</feature>
<feature type="disulfide bond" evidence="3">
    <location>
        <begin position="48"/>
        <end position="92"/>
    </location>
</feature>
<feature type="disulfide bond" evidence="3">
    <location>
        <begin position="138"/>
        <end position="187"/>
    </location>
</feature>
<feature type="disulfide bond" evidence="3">
    <location>
        <begin position="234"/>
        <end position="289"/>
    </location>
</feature>
<feature type="disulfide bond" evidence="3">
    <location>
        <begin position="430"/>
        <end position="495"/>
    </location>
</feature>
<keyword id="KW-0067">ATP-binding</keyword>
<keyword id="KW-1003">Cell membrane</keyword>
<keyword id="KW-1015">Disulfide bond</keyword>
<keyword id="KW-0325">Glycoprotein</keyword>
<keyword id="KW-0391">Immunity</keyword>
<keyword id="KW-0393">Immunoglobulin domain</keyword>
<keyword id="KW-0395">Inflammatory response</keyword>
<keyword id="KW-0399">Innate immunity</keyword>
<keyword id="KW-0418">Kinase</keyword>
<keyword id="KW-0472">Membrane</keyword>
<keyword id="KW-0547">Nucleotide-binding</keyword>
<keyword id="KW-0597">Phosphoprotein</keyword>
<keyword id="KW-0675">Receptor</keyword>
<keyword id="KW-1185">Reference proteome</keyword>
<keyword id="KW-0677">Repeat</keyword>
<keyword id="KW-0732">Signal</keyword>
<keyword id="KW-0808">Transferase</keyword>
<keyword id="KW-0812">Transmembrane</keyword>
<keyword id="KW-1133">Transmembrane helix</keyword>
<keyword id="KW-0829">Tyrosine-protein kinase</keyword>
<keyword id="KW-0832">Ubl conjugation</keyword>
<organism>
    <name type="scientific">Danio rerio</name>
    <name type="common">Zebrafish</name>
    <name type="synonym">Brachydanio rerio</name>
    <dbReference type="NCBI Taxonomy" id="7955"/>
    <lineage>
        <taxon>Eukaryota</taxon>
        <taxon>Metazoa</taxon>
        <taxon>Chordata</taxon>
        <taxon>Craniata</taxon>
        <taxon>Vertebrata</taxon>
        <taxon>Euteleostomi</taxon>
        <taxon>Actinopterygii</taxon>
        <taxon>Neopterygii</taxon>
        <taxon>Teleostei</taxon>
        <taxon>Ostariophysi</taxon>
        <taxon>Cypriniformes</taxon>
        <taxon>Danionidae</taxon>
        <taxon>Danioninae</taxon>
        <taxon>Danio</taxon>
    </lineage>
</organism>
<dbReference type="EC" id="2.7.10.1"/>
<dbReference type="EMBL" id="AF240639">
    <property type="protein sequence ID" value="AAF76872.1"/>
    <property type="molecule type" value="mRNA"/>
</dbReference>
<dbReference type="RefSeq" id="NP_571747.1">
    <property type="nucleotide sequence ID" value="NM_131672.1"/>
</dbReference>
<dbReference type="SMR" id="Q9I8N6"/>
<dbReference type="FunCoup" id="Q9I8N6">
    <property type="interactions" value="1202"/>
</dbReference>
<dbReference type="STRING" id="7955.ENSDARP00000148187"/>
<dbReference type="GlyCosmos" id="Q9I8N6">
    <property type="glycosylation" value="10 sites, No reported glycans"/>
</dbReference>
<dbReference type="PaxDb" id="7955-ENSDARP00000089365"/>
<dbReference type="GeneID" id="64274"/>
<dbReference type="KEGG" id="dre:64274"/>
<dbReference type="AGR" id="ZFIN:ZDB-GENE-001205-1"/>
<dbReference type="CTD" id="64274"/>
<dbReference type="ZFIN" id="ZDB-GENE-001205-1">
    <property type="gene designation" value="csf1ra"/>
</dbReference>
<dbReference type="eggNOG" id="KOG0200">
    <property type="taxonomic scope" value="Eukaryota"/>
</dbReference>
<dbReference type="InParanoid" id="Q9I8N6"/>
<dbReference type="OrthoDB" id="6077854at2759"/>
<dbReference type="PhylomeDB" id="Q9I8N6"/>
<dbReference type="Reactome" id="R-DRE-449836">
    <property type="pathway name" value="Other interleukin signaling"/>
</dbReference>
<dbReference type="PRO" id="PR:Q9I8N6"/>
<dbReference type="Proteomes" id="UP000000437">
    <property type="component" value="Chromosome 14"/>
</dbReference>
<dbReference type="GO" id="GO:1990682">
    <property type="term" value="C:CSF1-CSF1R complex"/>
    <property type="evidence" value="ECO:0000318"/>
    <property type="project" value="GO_Central"/>
</dbReference>
<dbReference type="GO" id="GO:0005886">
    <property type="term" value="C:plasma membrane"/>
    <property type="evidence" value="ECO:0000318"/>
    <property type="project" value="GO_Central"/>
</dbReference>
<dbReference type="GO" id="GO:0043235">
    <property type="term" value="C:receptor complex"/>
    <property type="evidence" value="ECO:0000318"/>
    <property type="project" value="GO_Central"/>
</dbReference>
<dbReference type="GO" id="GO:0005524">
    <property type="term" value="F:ATP binding"/>
    <property type="evidence" value="ECO:0007669"/>
    <property type="project" value="UniProtKB-KW"/>
</dbReference>
<dbReference type="GO" id="GO:0019955">
    <property type="term" value="F:cytokine binding"/>
    <property type="evidence" value="ECO:0007669"/>
    <property type="project" value="InterPro"/>
</dbReference>
<dbReference type="GO" id="GO:0019838">
    <property type="term" value="F:growth factor binding"/>
    <property type="evidence" value="ECO:0000318"/>
    <property type="project" value="GO_Central"/>
</dbReference>
<dbReference type="GO" id="GO:0005011">
    <property type="term" value="F:macrophage colony-stimulating factor receptor activity"/>
    <property type="evidence" value="ECO:0000318"/>
    <property type="project" value="GO_Central"/>
</dbReference>
<dbReference type="GO" id="GO:0016477">
    <property type="term" value="P:cell migration"/>
    <property type="evidence" value="ECO:0000318"/>
    <property type="project" value="GO_Central"/>
</dbReference>
<dbReference type="GO" id="GO:0007169">
    <property type="term" value="P:cell surface receptor protein tyrosine kinase signaling pathway"/>
    <property type="evidence" value="ECO:0000318"/>
    <property type="project" value="GO_Central"/>
</dbReference>
<dbReference type="GO" id="GO:0048066">
    <property type="term" value="P:developmental pigmentation"/>
    <property type="evidence" value="ECO:0000315"/>
    <property type="project" value="ZFIN"/>
</dbReference>
<dbReference type="GO" id="GO:0002383">
    <property type="term" value="P:immune response in brain or nervous system"/>
    <property type="evidence" value="ECO:0000315"/>
    <property type="project" value="ZFIN"/>
</dbReference>
<dbReference type="GO" id="GO:0006954">
    <property type="term" value="P:inflammatory response"/>
    <property type="evidence" value="ECO:0007669"/>
    <property type="project" value="UniProtKB-KW"/>
</dbReference>
<dbReference type="GO" id="GO:0045087">
    <property type="term" value="P:innate immune response"/>
    <property type="evidence" value="ECO:0007669"/>
    <property type="project" value="UniProtKB-KW"/>
</dbReference>
<dbReference type="GO" id="GO:0006629">
    <property type="term" value="P:lipid metabolic process"/>
    <property type="evidence" value="ECO:0000315"/>
    <property type="project" value="ZFIN"/>
</dbReference>
<dbReference type="GO" id="GO:0048246">
    <property type="term" value="P:macrophage chemotaxis"/>
    <property type="evidence" value="ECO:0000315"/>
    <property type="project" value="ZFIN"/>
</dbReference>
<dbReference type="GO" id="GO:0030318">
    <property type="term" value="P:melanocyte differentiation"/>
    <property type="evidence" value="ECO:0000315"/>
    <property type="project" value="ZFIN"/>
</dbReference>
<dbReference type="GO" id="GO:0097324">
    <property type="term" value="P:melanocyte migration"/>
    <property type="evidence" value="ECO:0000315"/>
    <property type="project" value="ZFIN"/>
</dbReference>
<dbReference type="GO" id="GO:0014005">
    <property type="term" value="P:microglia development"/>
    <property type="evidence" value="ECO:0000315"/>
    <property type="project" value="ZFIN"/>
</dbReference>
<dbReference type="GO" id="GO:0014004">
    <property type="term" value="P:microglia differentiation"/>
    <property type="evidence" value="ECO:0000315"/>
    <property type="project" value="ZFIN"/>
</dbReference>
<dbReference type="GO" id="GO:0036035">
    <property type="term" value="P:osteoclast development"/>
    <property type="evidence" value="ECO:0000315"/>
    <property type="project" value="ZFIN"/>
</dbReference>
<dbReference type="GO" id="GO:0030316">
    <property type="term" value="P:osteoclast differentiation"/>
    <property type="evidence" value="ECO:0000318"/>
    <property type="project" value="GO_Central"/>
</dbReference>
<dbReference type="GO" id="GO:0036179">
    <property type="term" value="P:osteoclast maturation"/>
    <property type="evidence" value="ECO:0000315"/>
    <property type="project" value="ZFIN"/>
</dbReference>
<dbReference type="GO" id="GO:0043473">
    <property type="term" value="P:pigmentation"/>
    <property type="evidence" value="ECO:0000315"/>
    <property type="project" value="ZFIN"/>
</dbReference>
<dbReference type="GO" id="GO:0030335">
    <property type="term" value="P:positive regulation of cell migration"/>
    <property type="evidence" value="ECO:0000318"/>
    <property type="project" value="GO_Central"/>
</dbReference>
<dbReference type="GO" id="GO:0008284">
    <property type="term" value="P:positive regulation of cell population proliferation"/>
    <property type="evidence" value="ECO:0000318"/>
    <property type="project" value="GO_Central"/>
</dbReference>
<dbReference type="GO" id="GO:0010759">
    <property type="term" value="P:positive regulation of macrophage chemotaxis"/>
    <property type="evidence" value="ECO:0000315"/>
    <property type="project" value="ZFIN"/>
</dbReference>
<dbReference type="GO" id="GO:0061075">
    <property type="term" value="P:positive regulation of neural retina development"/>
    <property type="evidence" value="ECO:0000315"/>
    <property type="project" value="ZFIN"/>
</dbReference>
<dbReference type="GO" id="GO:0048070">
    <property type="term" value="P:regulation of developmental pigmentation"/>
    <property type="evidence" value="ECO:0000315"/>
    <property type="project" value="ZFIN"/>
</dbReference>
<dbReference type="GO" id="GO:0030100">
    <property type="term" value="P:regulation of endocytosis"/>
    <property type="evidence" value="ECO:0000315"/>
    <property type="project" value="ZFIN"/>
</dbReference>
<dbReference type="GO" id="GO:0043408">
    <property type="term" value="P:regulation of MAPK cascade"/>
    <property type="evidence" value="ECO:0000318"/>
    <property type="project" value="GO_Central"/>
</dbReference>
<dbReference type="GO" id="GO:0031641">
    <property type="term" value="P:regulation of myelination"/>
    <property type="evidence" value="ECO:0000315"/>
    <property type="project" value="ZFIN"/>
</dbReference>
<dbReference type="GO" id="GO:0042481">
    <property type="term" value="P:regulation of odontogenesis"/>
    <property type="evidence" value="ECO:0000316"/>
    <property type="project" value="ZFIN"/>
</dbReference>
<dbReference type="GO" id="GO:2001204">
    <property type="term" value="P:regulation of osteoclast development"/>
    <property type="evidence" value="ECO:0000315"/>
    <property type="project" value="ZFIN"/>
</dbReference>
<dbReference type="GO" id="GO:0050938">
    <property type="term" value="P:regulation of xanthophore differentiation"/>
    <property type="evidence" value="ECO:0000315"/>
    <property type="project" value="ZFIN"/>
</dbReference>
<dbReference type="GO" id="GO:0036269">
    <property type="term" value="P:swimming behavior"/>
    <property type="evidence" value="ECO:0000315"/>
    <property type="project" value="ZFIN"/>
</dbReference>
<dbReference type="GO" id="GO:0050936">
    <property type="term" value="P:xanthophore differentiation"/>
    <property type="evidence" value="ECO:0000315"/>
    <property type="project" value="ZFIN"/>
</dbReference>
<dbReference type="CDD" id="cd05106">
    <property type="entry name" value="PTKc_CSF-1R"/>
    <property type="match status" value="1"/>
</dbReference>
<dbReference type="FunFam" id="2.60.40.10:FF:002103">
    <property type="entry name" value="Colony-stimulating factor 1 receptor, a"/>
    <property type="match status" value="1"/>
</dbReference>
<dbReference type="FunFam" id="2.60.40.10:FF:001029">
    <property type="entry name" value="Macrophage colony-stimulating factor 1 receptor"/>
    <property type="match status" value="1"/>
</dbReference>
<dbReference type="FunFam" id="2.60.40.10:FF:002322">
    <property type="entry name" value="macrophage colony-stimulating factor 1 receptor"/>
    <property type="match status" value="1"/>
</dbReference>
<dbReference type="FunFam" id="1.10.510.10:FF:000177">
    <property type="entry name" value="Mast/stem cell growth factor receptor"/>
    <property type="match status" value="1"/>
</dbReference>
<dbReference type="FunFam" id="3.30.200.20:FF:000025">
    <property type="entry name" value="Platelet-derived growth factor receptor alpha"/>
    <property type="match status" value="1"/>
</dbReference>
<dbReference type="Gene3D" id="2.60.40.10">
    <property type="entry name" value="Immunoglobulins"/>
    <property type="match status" value="5"/>
</dbReference>
<dbReference type="Gene3D" id="3.30.200.20">
    <property type="entry name" value="Phosphorylase Kinase, domain 1"/>
    <property type="match status" value="1"/>
</dbReference>
<dbReference type="Gene3D" id="1.10.510.10">
    <property type="entry name" value="Transferase(Phosphotransferase) domain 1"/>
    <property type="match status" value="1"/>
</dbReference>
<dbReference type="InterPro" id="IPR030658">
    <property type="entry name" value="CSF-1_receptor"/>
</dbReference>
<dbReference type="InterPro" id="IPR007110">
    <property type="entry name" value="Ig-like_dom"/>
</dbReference>
<dbReference type="InterPro" id="IPR036179">
    <property type="entry name" value="Ig-like_dom_sf"/>
</dbReference>
<dbReference type="InterPro" id="IPR013783">
    <property type="entry name" value="Ig-like_fold"/>
</dbReference>
<dbReference type="InterPro" id="IPR003599">
    <property type="entry name" value="Ig_sub"/>
</dbReference>
<dbReference type="InterPro" id="IPR003598">
    <property type="entry name" value="Ig_sub2"/>
</dbReference>
<dbReference type="InterPro" id="IPR011009">
    <property type="entry name" value="Kinase-like_dom_sf"/>
</dbReference>
<dbReference type="InterPro" id="IPR000719">
    <property type="entry name" value="Prot_kinase_dom"/>
</dbReference>
<dbReference type="InterPro" id="IPR017441">
    <property type="entry name" value="Protein_kinase_ATP_BS"/>
</dbReference>
<dbReference type="InterPro" id="IPR050122">
    <property type="entry name" value="RTK"/>
</dbReference>
<dbReference type="InterPro" id="IPR001245">
    <property type="entry name" value="Ser-Thr/Tyr_kinase_cat_dom"/>
</dbReference>
<dbReference type="InterPro" id="IPR008266">
    <property type="entry name" value="Tyr_kinase_AS"/>
</dbReference>
<dbReference type="InterPro" id="IPR020635">
    <property type="entry name" value="Tyr_kinase_cat_dom"/>
</dbReference>
<dbReference type="InterPro" id="IPR001824">
    <property type="entry name" value="Tyr_kinase_rcpt_3_CS"/>
</dbReference>
<dbReference type="PANTHER" id="PTHR24416:SF47">
    <property type="entry name" value="MACROPHAGE COLONY-STIMULATING FACTOR 1 RECEPTOR"/>
    <property type="match status" value="1"/>
</dbReference>
<dbReference type="PANTHER" id="PTHR24416">
    <property type="entry name" value="TYROSINE-PROTEIN KINASE RECEPTOR"/>
    <property type="match status" value="1"/>
</dbReference>
<dbReference type="Pfam" id="PF13927">
    <property type="entry name" value="Ig_3"/>
    <property type="match status" value="1"/>
</dbReference>
<dbReference type="Pfam" id="PF25305">
    <property type="entry name" value="Ig_PDGFR_d4"/>
    <property type="match status" value="1"/>
</dbReference>
<dbReference type="Pfam" id="PF07714">
    <property type="entry name" value="PK_Tyr_Ser-Thr"/>
    <property type="match status" value="1"/>
</dbReference>
<dbReference type="PIRSF" id="PIRSF500947">
    <property type="entry name" value="CSF-1_receptor"/>
    <property type="match status" value="1"/>
</dbReference>
<dbReference type="PIRSF" id="PIRSF000615">
    <property type="entry name" value="TyrPK_CSF1-R"/>
    <property type="match status" value="1"/>
</dbReference>
<dbReference type="PRINTS" id="PR01832">
    <property type="entry name" value="VEGFRECEPTOR"/>
</dbReference>
<dbReference type="SMART" id="SM00409">
    <property type="entry name" value="IG"/>
    <property type="match status" value="4"/>
</dbReference>
<dbReference type="SMART" id="SM00408">
    <property type="entry name" value="IGc2"/>
    <property type="match status" value="1"/>
</dbReference>
<dbReference type="SMART" id="SM00219">
    <property type="entry name" value="TyrKc"/>
    <property type="match status" value="1"/>
</dbReference>
<dbReference type="SUPFAM" id="SSF48726">
    <property type="entry name" value="Immunoglobulin"/>
    <property type="match status" value="5"/>
</dbReference>
<dbReference type="SUPFAM" id="SSF56112">
    <property type="entry name" value="Protein kinase-like (PK-like)"/>
    <property type="match status" value="1"/>
</dbReference>
<dbReference type="PROSITE" id="PS50835">
    <property type="entry name" value="IG_LIKE"/>
    <property type="match status" value="3"/>
</dbReference>
<dbReference type="PROSITE" id="PS00107">
    <property type="entry name" value="PROTEIN_KINASE_ATP"/>
    <property type="match status" value="1"/>
</dbReference>
<dbReference type="PROSITE" id="PS50011">
    <property type="entry name" value="PROTEIN_KINASE_DOM"/>
    <property type="match status" value="1"/>
</dbReference>
<dbReference type="PROSITE" id="PS00109">
    <property type="entry name" value="PROTEIN_KINASE_TYR"/>
    <property type="match status" value="1"/>
</dbReference>
<dbReference type="PROSITE" id="PS00240">
    <property type="entry name" value="RECEPTOR_TYR_KIN_III"/>
    <property type="match status" value="1"/>
</dbReference>